<name>MOEZ_MYCTU</name>
<evidence type="ECO:0000250" key="1"/>
<evidence type="ECO:0000255" key="2"/>
<evidence type="ECO:0000255" key="3">
    <source>
        <dbReference type="PROSITE-ProRule" id="PRU00173"/>
    </source>
</evidence>
<evidence type="ECO:0000269" key="4">
    <source>
    </source>
</evidence>
<evidence type="ECO:0000269" key="5">
    <source>
    </source>
</evidence>
<evidence type="ECO:0000305" key="6"/>
<dbReference type="EC" id="2.7.7.-"/>
<dbReference type="EC" id="2.8.1.-"/>
<dbReference type="EMBL" id="AL123456">
    <property type="protein sequence ID" value="CCP46021.1"/>
    <property type="molecule type" value="Genomic_DNA"/>
</dbReference>
<dbReference type="PIR" id="G70594">
    <property type="entry name" value="G70594"/>
</dbReference>
<dbReference type="RefSeq" id="WP_003416855.1">
    <property type="nucleotide sequence ID" value="NZ_NVQJ01000003.1"/>
</dbReference>
<dbReference type="RefSeq" id="YP_177942.1">
    <property type="nucleotide sequence ID" value="NC_000962.3"/>
</dbReference>
<dbReference type="SMR" id="P9WMN7"/>
<dbReference type="FunCoup" id="P9WMN7">
    <property type="interactions" value="424"/>
</dbReference>
<dbReference type="STRING" id="83332.Rv3206c"/>
<dbReference type="PaxDb" id="83332-Rv3206c"/>
<dbReference type="DNASU" id="888871"/>
<dbReference type="GeneID" id="888871"/>
<dbReference type="KEGG" id="mtu:Rv3206c"/>
<dbReference type="KEGG" id="mtv:RVBD_3206c"/>
<dbReference type="TubercuList" id="Rv3206c"/>
<dbReference type="eggNOG" id="COG0476">
    <property type="taxonomic scope" value="Bacteria"/>
</dbReference>
<dbReference type="eggNOG" id="COG0607">
    <property type="taxonomic scope" value="Bacteria"/>
</dbReference>
<dbReference type="InParanoid" id="P9WMN7"/>
<dbReference type="OrthoDB" id="9804286at2"/>
<dbReference type="PhylomeDB" id="P9WMN7"/>
<dbReference type="BioCyc" id="MetaCyc:G185E-7476-MONOMER"/>
<dbReference type="Reactome" id="R-MTU-936654">
    <property type="pathway name" value="Cysteine synthesis from O-phosphoserine"/>
</dbReference>
<dbReference type="Proteomes" id="UP000001584">
    <property type="component" value="Chromosome"/>
</dbReference>
<dbReference type="GO" id="GO:0005737">
    <property type="term" value="C:cytoplasm"/>
    <property type="evidence" value="ECO:0000318"/>
    <property type="project" value="GO_Central"/>
</dbReference>
<dbReference type="GO" id="GO:0005829">
    <property type="term" value="C:cytosol"/>
    <property type="evidence" value="ECO:0000318"/>
    <property type="project" value="GO_Central"/>
</dbReference>
<dbReference type="GO" id="GO:0016020">
    <property type="term" value="C:membrane"/>
    <property type="evidence" value="ECO:0007669"/>
    <property type="project" value="UniProtKB-SubCell"/>
</dbReference>
<dbReference type="GO" id="GO:0009274">
    <property type="term" value="C:peptidoglycan-based cell wall"/>
    <property type="evidence" value="ECO:0007005"/>
    <property type="project" value="MTBBASE"/>
</dbReference>
<dbReference type="GO" id="GO:0005524">
    <property type="term" value="F:ATP binding"/>
    <property type="evidence" value="ECO:0007669"/>
    <property type="project" value="UniProtKB-KW"/>
</dbReference>
<dbReference type="GO" id="GO:0016779">
    <property type="term" value="F:nucleotidyltransferase activity"/>
    <property type="evidence" value="ECO:0000318"/>
    <property type="project" value="GO_Central"/>
</dbReference>
<dbReference type="GO" id="GO:0008146">
    <property type="term" value="F:sulfotransferase activity"/>
    <property type="evidence" value="ECO:0000314"/>
    <property type="project" value="MTBBASE"/>
</dbReference>
<dbReference type="GO" id="GO:0004792">
    <property type="term" value="F:thiosulfate-cyanide sulfurtransferase activity"/>
    <property type="evidence" value="ECO:0000318"/>
    <property type="project" value="GO_Central"/>
</dbReference>
<dbReference type="GO" id="GO:0016782">
    <property type="term" value="F:transferase activity, transferring sulphur-containing groups"/>
    <property type="evidence" value="ECO:0000304"/>
    <property type="project" value="Reactome"/>
</dbReference>
<dbReference type="GO" id="GO:0008641">
    <property type="term" value="F:ubiquitin-like modifier activating enzyme activity"/>
    <property type="evidence" value="ECO:0007669"/>
    <property type="project" value="InterPro"/>
</dbReference>
<dbReference type="GO" id="GO:0019344">
    <property type="term" value="P:cysteine biosynthetic process"/>
    <property type="evidence" value="ECO:0000314"/>
    <property type="project" value="MTBBASE"/>
</dbReference>
<dbReference type="GO" id="GO:0006535">
    <property type="term" value="P:cysteine biosynthetic process from serine"/>
    <property type="evidence" value="ECO:0000304"/>
    <property type="project" value="Reactome"/>
</dbReference>
<dbReference type="GO" id="GO:0042783">
    <property type="term" value="P:symbiont-mediated evasion of host immune response"/>
    <property type="evidence" value="ECO:0000315"/>
    <property type="project" value="MTBBASE"/>
</dbReference>
<dbReference type="CDD" id="cd00158">
    <property type="entry name" value="RHOD"/>
    <property type="match status" value="1"/>
</dbReference>
<dbReference type="CDD" id="cd00757">
    <property type="entry name" value="ThiF_MoeB_HesA_family"/>
    <property type="match status" value="1"/>
</dbReference>
<dbReference type="FunFam" id="3.40.50.720:FF:000033">
    <property type="entry name" value="Adenylyltransferase and sulfurtransferase MOCS3"/>
    <property type="match status" value="1"/>
</dbReference>
<dbReference type="FunFam" id="3.40.250.10:FF:000025">
    <property type="entry name" value="Molybdopterin biosynthesis MoeZ"/>
    <property type="match status" value="1"/>
</dbReference>
<dbReference type="Gene3D" id="3.40.50.720">
    <property type="entry name" value="NAD(P)-binding Rossmann-like Domain"/>
    <property type="match status" value="1"/>
</dbReference>
<dbReference type="Gene3D" id="3.40.250.10">
    <property type="entry name" value="Rhodanese-like domain"/>
    <property type="match status" value="1"/>
</dbReference>
<dbReference type="InterPro" id="IPR001763">
    <property type="entry name" value="Rhodanese-like_dom"/>
</dbReference>
<dbReference type="InterPro" id="IPR036873">
    <property type="entry name" value="Rhodanese-like_dom_sf"/>
</dbReference>
<dbReference type="InterPro" id="IPR045886">
    <property type="entry name" value="ThiF/MoeB/HesA"/>
</dbReference>
<dbReference type="InterPro" id="IPR000594">
    <property type="entry name" value="ThiF_NAD_FAD-bd"/>
</dbReference>
<dbReference type="InterPro" id="IPR035985">
    <property type="entry name" value="Ubiquitin-activating_enz"/>
</dbReference>
<dbReference type="NCBIfam" id="NF004281">
    <property type="entry name" value="PRK05690.1"/>
    <property type="match status" value="1"/>
</dbReference>
<dbReference type="NCBIfam" id="NF005902">
    <property type="entry name" value="PRK07878.1"/>
    <property type="match status" value="1"/>
</dbReference>
<dbReference type="PANTHER" id="PTHR10953:SF102">
    <property type="entry name" value="ADENYLYLTRANSFERASE AND SULFURTRANSFERASE MOCS3"/>
    <property type="match status" value="1"/>
</dbReference>
<dbReference type="PANTHER" id="PTHR10953">
    <property type="entry name" value="UBIQUITIN-ACTIVATING ENZYME E1"/>
    <property type="match status" value="1"/>
</dbReference>
<dbReference type="Pfam" id="PF00581">
    <property type="entry name" value="Rhodanese"/>
    <property type="match status" value="1"/>
</dbReference>
<dbReference type="Pfam" id="PF00899">
    <property type="entry name" value="ThiF"/>
    <property type="match status" value="1"/>
</dbReference>
<dbReference type="SMART" id="SM00450">
    <property type="entry name" value="RHOD"/>
    <property type="match status" value="1"/>
</dbReference>
<dbReference type="SUPFAM" id="SSF69572">
    <property type="entry name" value="Activating enzymes of the ubiquitin-like proteins"/>
    <property type="match status" value="1"/>
</dbReference>
<dbReference type="PROSITE" id="PS50206">
    <property type="entry name" value="RHODANESE_3"/>
    <property type="match status" value="1"/>
</dbReference>
<feature type="chain" id="PRO_0000401136" description="Probable adenylyltransferase/sulfurtransferase MoeZ">
    <location>
        <begin position="1"/>
        <end position="392"/>
    </location>
</feature>
<feature type="transmembrane region" description="Helical" evidence="2">
    <location>
        <begin position="45"/>
        <end position="65"/>
    </location>
</feature>
<feature type="domain" description="Rhodanese" evidence="3">
    <location>
        <begin position="300"/>
        <end position="390"/>
    </location>
</feature>
<feature type="active site" description="Glycyl thioester intermediate; for adenylyltransferase activity" evidence="1">
    <location>
        <position position="203"/>
    </location>
</feature>
<feature type="active site" description="Cysteine persulfide intermediate; for sulfurtransferase activity" evidence="3">
    <location>
        <position position="350"/>
    </location>
</feature>
<feature type="binding site" evidence="1">
    <location>
        <position position="52"/>
    </location>
    <ligand>
        <name>ATP</name>
        <dbReference type="ChEBI" id="CHEBI:30616"/>
    </ligand>
</feature>
<feature type="binding site" evidence="1">
    <location>
        <position position="73"/>
    </location>
    <ligand>
        <name>ATP</name>
        <dbReference type="ChEBI" id="CHEBI:30616"/>
    </ligand>
</feature>
<feature type="binding site" evidence="1">
    <location>
        <begin position="80"/>
        <end position="84"/>
    </location>
    <ligand>
        <name>ATP</name>
        <dbReference type="ChEBI" id="CHEBI:30616"/>
    </ligand>
</feature>
<feature type="binding site" evidence="1">
    <location>
        <position position="97"/>
    </location>
    <ligand>
        <name>ATP</name>
        <dbReference type="ChEBI" id="CHEBI:30616"/>
    </ligand>
</feature>
<feature type="binding site" evidence="1">
    <location>
        <begin position="141"/>
        <end position="142"/>
    </location>
    <ligand>
        <name>ATP</name>
        <dbReference type="ChEBI" id="CHEBI:30616"/>
    </ligand>
</feature>
<protein>
    <recommendedName>
        <fullName>Probable adenylyltransferase/sulfurtransferase MoeZ</fullName>
    </recommendedName>
    <domain>
        <recommendedName>
            <fullName>Sulfur carrier protein CysO adenylyltransferase</fullName>
            <ecNumber>2.7.7.-</ecNumber>
        </recommendedName>
    </domain>
    <domain>
        <recommendedName>
            <fullName>Sulfur carrier protein CysO sulfurtransferase</fullName>
            <ecNumber>2.8.1.-</ecNumber>
        </recommendedName>
    </domain>
</protein>
<gene>
    <name type="primary">moeZ</name>
    <name type="synonym">moeB1</name>
    <name type="ordered locus">Rv3206c</name>
</gene>
<accession>P9WMN7</accession>
<accession>L0TDG4</accession>
<accession>Q6MWZ9</accession>
<accession>Q7D5X9</accession>
<comment type="function">
    <text evidence="5 6">Catalyzes the conversion of the sulfur carrier protein CysO to CysO-thiocarboxylate. The reaction is thought to proceed in two steps: first, ATP-dependent activation of CysO as acyl-adenylate (CysO-COOAMP), followed by sulfur transfer to give CysO-thiocarboxylate (CysO-COSH) (Probable). The sulfur source is unknown.</text>
</comment>
<comment type="subcellular location">
    <subcellularLocation>
        <location evidence="6">Membrane</location>
        <topology evidence="6">Single-pass membrane protein</topology>
    </subcellularLocation>
</comment>
<comment type="induction">
    <text evidence="4">Up-regulated under oxidative stress conditions.</text>
</comment>
<comment type="similarity">
    <text evidence="6">In the N-terminal section; belongs to the HesA/MoeB/ThiF family.</text>
</comment>
<organism>
    <name type="scientific">Mycobacterium tuberculosis (strain ATCC 25618 / H37Rv)</name>
    <dbReference type="NCBI Taxonomy" id="83332"/>
    <lineage>
        <taxon>Bacteria</taxon>
        <taxon>Bacillati</taxon>
        <taxon>Actinomycetota</taxon>
        <taxon>Actinomycetes</taxon>
        <taxon>Mycobacteriales</taxon>
        <taxon>Mycobacteriaceae</taxon>
        <taxon>Mycobacterium</taxon>
        <taxon>Mycobacterium tuberculosis complex</taxon>
    </lineage>
</organism>
<reference key="1">
    <citation type="journal article" date="1998" name="Nature">
        <title>Deciphering the biology of Mycobacterium tuberculosis from the complete genome sequence.</title>
        <authorList>
            <person name="Cole S.T."/>
            <person name="Brosch R."/>
            <person name="Parkhill J."/>
            <person name="Garnier T."/>
            <person name="Churcher C.M."/>
            <person name="Harris D.E."/>
            <person name="Gordon S.V."/>
            <person name="Eiglmeier K."/>
            <person name="Gas S."/>
            <person name="Barry C.E. III"/>
            <person name="Tekaia F."/>
            <person name="Badcock K."/>
            <person name="Basham D."/>
            <person name="Brown D."/>
            <person name="Chillingworth T."/>
            <person name="Connor R."/>
            <person name="Davies R.M."/>
            <person name="Devlin K."/>
            <person name="Feltwell T."/>
            <person name="Gentles S."/>
            <person name="Hamlin N."/>
            <person name="Holroyd S."/>
            <person name="Hornsby T."/>
            <person name="Jagels K."/>
            <person name="Krogh A."/>
            <person name="McLean J."/>
            <person name="Moule S."/>
            <person name="Murphy L.D."/>
            <person name="Oliver S."/>
            <person name="Osborne J."/>
            <person name="Quail M.A."/>
            <person name="Rajandream M.A."/>
            <person name="Rogers J."/>
            <person name="Rutter S."/>
            <person name="Seeger K."/>
            <person name="Skelton S."/>
            <person name="Squares S."/>
            <person name="Squares R."/>
            <person name="Sulston J.E."/>
            <person name="Taylor K."/>
            <person name="Whitehead S."/>
            <person name="Barrell B.G."/>
        </authorList>
    </citation>
    <scope>NUCLEOTIDE SEQUENCE [LARGE SCALE GENOMIC DNA]</scope>
    <source>
        <strain>ATCC 25618 / H37Rv</strain>
    </source>
</reference>
<reference key="2">
    <citation type="journal article" date="2002" name="Mol. Microbiol.">
        <title>Role of the extracytoplasmic-function sigma factor sigma(H) in Mycobacterium tuberculosis global gene expression.</title>
        <authorList>
            <person name="Manganelli R."/>
            <person name="Voskuil M.I."/>
            <person name="Schoolnik G.K."/>
            <person name="Dubnau E."/>
            <person name="Gomez M."/>
            <person name="Smith I."/>
        </authorList>
    </citation>
    <scope>INDUCTION</scope>
    <source>
        <strain>ATCC 25618 / H37Rv</strain>
    </source>
</reference>
<reference key="3">
    <citation type="journal article" date="2005" name="J. Am. Chem. Soc.">
        <title>Reconstitution of a new cysteine biosynthetic pathway in Mycobacterium tuberculosis.</title>
        <authorList>
            <person name="Burns K.E."/>
            <person name="Baumgart S."/>
            <person name="Dorrestein P.C."/>
            <person name="Zhai H."/>
            <person name="McLafferty F.W."/>
            <person name="Begley T.P."/>
        </authorList>
    </citation>
    <scope>FUNCTION IN CYSO-THIOCARBOXYLATE BIOSYNTHESIS</scope>
    <source>
        <strain>ATCC 25618 / H37Rv</strain>
    </source>
</reference>
<reference key="4">
    <citation type="journal article" date="2011" name="Mol. Cell. Proteomics">
        <title>Proteogenomic analysis of Mycobacterium tuberculosis by high resolution mass spectrometry.</title>
        <authorList>
            <person name="Kelkar D.S."/>
            <person name="Kumar D."/>
            <person name="Kumar P."/>
            <person name="Balakrishnan L."/>
            <person name="Muthusamy B."/>
            <person name="Yadav A.K."/>
            <person name="Shrivastava P."/>
            <person name="Marimuthu A."/>
            <person name="Anand S."/>
            <person name="Sundaram H."/>
            <person name="Kingsbury R."/>
            <person name="Harsha H.C."/>
            <person name="Nair B."/>
            <person name="Prasad T.S."/>
            <person name="Chauhan D.S."/>
            <person name="Katoch K."/>
            <person name="Katoch V.M."/>
            <person name="Kumar P."/>
            <person name="Chaerkady R."/>
            <person name="Ramachandran S."/>
            <person name="Dash D."/>
            <person name="Pandey A."/>
        </authorList>
    </citation>
    <scope>IDENTIFICATION BY MASS SPECTROMETRY [LARGE SCALE ANALYSIS]</scope>
    <source>
        <strain>ATCC 25618 / H37Rv</strain>
    </source>
</reference>
<sequence>MSTSLPPLVEPASALSREEVARYSRHLIIPDLGVDGQKRLKNARVLVIGAGGLGAPTLLYLAAAGVGTIGIVDFDVVDESNLQRQVIHGVADVGRSKAQSARDSIVAINPLIRVRLHELRLAPSNAVDLFKQYDLILDGTDNFATRYLVNDAAVLAGKPYVWGSIYRFEGQASVFWEDAPDGLGVNYRDLYPEPPPPGMVPSCAEGGVLGIICASVASVMGTEAIKLITGIGETLLGRLLVYDALEMSYRTITIRKDPSTPKITELVDYEQFCGVVADDAAQAAKGSTITPRELRDWLDSGRKLALIDVRDPVEWDIVHIDGAQLIPKSLINSGEGLAKLPQDRTAVLYCKTGVRSAEALAAVKKAGFSDAVHLQGGIVAWAKQMQPDMVMY</sequence>
<keyword id="KW-0067">ATP-binding</keyword>
<keyword id="KW-0472">Membrane</keyword>
<keyword id="KW-0511">Multifunctional enzyme</keyword>
<keyword id="KW-0547">Nucleotide-binding</keyword>
<keyword id="KW-0548">Nucleotidyltransferase</keyword>
<keyword id="KW-1185">Reference proteome</keyword>
<keyword id="KW-0808">Transferase</keyword>
<keyword id="KW-0812">Transmembrane</keyword>
<keyword id="KW-1133">Transmembrane helix</keyword>
<proteinExistence type="evidence at protein level"/>